<comment type="function">
    <text evidence="1">The UvrABC repair system catalyzes the recognition and processing of DNA lesions. UvrC both incises the 5' and 3' sides of the lesion. The N-terminal half is responsible for the 3' incision and the C-terminal half is responsible for the 5' incision.</text>
</comment>
<comment type="subunit">
    <text evidence="1">Interacts with UvrB in an incision complex.</text>
</comment>
<comment type="subcellular location">
    <subcellularLocation>
        <location evidence="1">Cytoplasm</location>
    </subcellularLocation>
</comment>
<comment type="similarity">
    <text evidence="1">Belongs to the UvrC family.</text>
</comment>
<gene>
    <name evidence="1" type="primary">uvrC</name>
    <name type="ordered locus">CLK_2812</name>
</gene>
<dbReference type="EMBL" id="CP000962">
    <property type="protein sequence ID" value="ACA56811.1"/>
    <property type="molecule type" value="Genomic_DNA"/>
</dbReference>
<dbReference type="RefSeq" id="WP_012344628.1">
    <property type="nucleotide sequence ID" value="NC_010520.1"/>
</dbReference>
<dbReference type="SMR" id="B1L273"/>
<dbReference type="KEGG" id="cbl:CLK_2812"/>
<dbReference type="HOGENOM" id="CLU_014841_3_2_9"/>
<dbReference type="GO" id="GO:0005737">
    <property type="term" value="C:cytoplasm"/>
    <property type="evidence" value="ECO:0007669"/>
    <property type="project" value="UniProtKB-SubCell"/>
</dbReference>
<dbReference type="GO" id="GO:0009380">
    <property type="term" value="C:excinuclease repair complex"/>
    <property type="evidence" value="ECO:0007669"/>
    <property type="project" value="InterPro"/>
</dbReference>
<dbReference type="GO" id="GO:0003677">
    <property type="term" value="F:DNA binding"/>
    <property type="evidence" value="ECO:0007669"/>
    <property type="project" value="UniProtKB-UniRule"/>
</dbReference>
<dbReference type="GO" id="GO:0009381">
    <property type="term" value="F:excinuclease ABC activity"/>
    <property type="evidence" value="ECO:0007669"/>
    <property type="project" value="UniProtKB-UniRule"/>
</dbReference>
<dbReference type="GO" id="GO:0006289">
    <property type="term" value="P:nucleotide-excision repair"/>
    <property type="evidence" value="ECO:0007669"/>
    <property type="project" value="UniProtKB-UniRule"/>
</dbReference>
<dbReference type="GO" id="GO:0009432">
    <property type="term" value="P:SOS response"/>
    <property type="evidence" value="ECO:0007669"/>
    <property type="project" value="UniProtKB-UniRule"/>
</dbReference>
<dbReference type="CDD" id="cd10434">
    <property type="entry name" value="GIY-YIG_UvrC_Cho"/>
    <property type="match status" value="1"/>
</dbReference>
<dbReference type="FunFam" id="3.40.1440.10:FF:000001">
    <property type="entry name" value="UvrABC system protein C"/>
    <property type="match status" value="1"/>
</dbReference>
<dbReference type="Gene3D" id="1.10.150.20">
    <property type="entry name" value="5' to 3' exonuclease, C-terminal subdomain"/>
    <property type="match status" value="1"/>
</dbReference>
<dbReference type="Gene3D" id="3.40.1440.10">
    <property type="entry name" value="GIY-YIG endonuclease"/>
    <property type="match status" value="1"/>
</dbReference>
<dbReference type="Gene3D" id="4.10.860.10">
    <property type="entry name" value="UVR domain"/>
    <property type="match status" value="1"/>
</dbReference>
<dbReference type="Gene3D" id="3.30.420.340">
    <property type="entry name" value="UvrC, RNAse H endonuclease domain"/>
    <property type="match status" value="1"/>
</dbReference>
<dbReference type="HAMAP" id="MF_00203">
    <property type="entry name" value="UvrC"/>
    <property type="match status" value="1"/>
</dbReference>
<dbReference type="InterPro" id="IPR041663">
    <property type="entry name" value="DisA/LigA_HHH"/>
</dbReference>
<dbReference type="InterPro" id="IPR000305">
    <property type="entry name" value="GIY-YIG_endonuc"/>
</dbReference>
<dbReference type="InterPro" id="IPR035901">
    <property type="entry name" value="GIY-YIG_endonuc_sf"/>
</dbReference>
<dbReference type="InterPro" id="IPR047296">
    <property type="entry name" value="GIY-YIG_UvrC_Cho"/>
</dbReference>
<dbReference type="InterPro" id="IPR010994">
    <property type="entry name" value="RuvA_2-like"/>
</dbReference>
<dbReference type="InterPro" id="IPR001943">
    <property type="entry name" value="UVR_dom"/>
</dbReference>
<dbReference type="InterPro" id="IPR036876">
    <property type="entry name" value="UVR_dom_sf"/>
</dbReference>
<dbReference type="InterPro" id="IPR050066">
    <property type="entry name" value="UvrABC_protein_C"/>
</dbReference>
<dbReference type="InterPro" id="IPR004791">
    <property type="entry name" value="UvrC"/>
</dbReference>
<dbReference type="InterPro" id="IPR001162">
    <property type="entry name" value="UvrC_RNase_H_dom"/>
</dbReference>
<dbReference type="InterPro" id="IPR038476">
    <property type="entry name" value="UvrC_RNase_H_dom_sf"/>
</dbReference>
<dbReference type="NCBIfam" id="NF001824">
    <property type="entry name" value="PRK00558.1-5"/>
    <property type="match status" value="1"/>
</dbReference>
<dbReference type="NCBIfam" id="TIGR00194">
    <property type="entry name" value="uvrC"/>
    <property type="match status" value="1"/>
</dbReference>
<dbReference type="PANTHER" id="PTHR30562:SF1">
    <property type="entry name" value="UVRABC SYSTEM PROTEIN C"/>
    <property type="match status" value="1"/>
</dbReference>
<dbReference type="PANTHER" id="PTHR30562">
    <property type="entry name" value="UVRC/OXIDOREDUCTASE"/>
    <property type="match status" value="1"/>
</dbReference>
<dbReference type="Pfam" id="PF01541">
    <property type="entry name" value="GIY-YIG"/>
    <property type="match status" value="1"/>
</dbReference>
<dbReference type="Pfam" id="PF12826">
    <property type="entry name" value="HHH_2"/>
    <property type="match status" value="1"/>
</dbReference>
<dbReference type="Pfam" id="PF02151">
    <property type="entry name" value="UVR"/>
    <property type="match status" value="1"/>
</dbReference>
<dbReference type="Pfam" id="PF22920">
    <property type="entry name" value="UvrC_RNaseH"/>
    <property type="match status" value="1"/>
</dbReference>
<dbReference type="Pfam" id="PF08459">
    <property type="entry name" value="UvrC_RNaseH_dom"/>
    <property type="match status" value="1"/>
</dbReference>
<dbReference type="SMART" id="SM00465">
    <property type="entry name" value="GIYc"/>
    <property type="match status" value="1"/>
</dbReference>
<dbReference type="SUPFAM" id="SSF46600">
    <property type="entry name" value="C-terminal UvrC-binding domain of UvrB"/>
    <property type="match status" value="1"/>
</dbReference>
<dbReference type="SUPFAM" id="SSF82771">
    <property type="entry name" value="GIY-YIG endonuclease"/>
    <property type="match status" value="1"/>
</dbReference>
<dbReference type="SUPFAM" id="SSF47781">
    <property type="entry name" value="RuvA domain 2-like"/>
    <property type="match status" value="1"/>
</dbReference>
<dbReference type="PROSITE" id="PS50164">
    <property type="entry name" value="GIY_YIG"/>
    <property type="match status" value="1"/>
</dbReference>
<dbReference type="PROSITE" id="PS50151">
    <property type="entry name" value="UVR"/>
    <property type="match status" value="1"/>
</dbReference>
<dbReference type="PROSITE" id="PS50165">
    <property type="entry name" value="UVRC"/>
    <property type="match status" value="1"/>
</dbReference>
<sequence length="618" mass="71559">MFDLEYQLKNLPDKPGVYLMKNNLGEIIYVGKAKILKNRVRQYFQKSQKHSEKVKAMVKNIEEFEYIITDSEIEALILECNLIKKYRPKYNILLKDDKHYPFIKVTLAEDFPRVISTRKVTKDGSKYFGPYVDGSSVKDIIELIKKTFPIRTCKKNIVEGAKAIRPCLNYQIGLCKAPCAQYIKKSEYREIIDDVIKLLSGKHLDIVENFKLNMEKAAENLEFEKAAMLRDKINIIEKIGEKQKIILNNFDNEDYISLYSDGKDTCFQVFFLRNGKIVGREHFIIEDTFDTNSSTLISNFLKEFYGGTAYIPKTIYVPNIEDEALLEQWLTLKKESKSTIKIPIKGEKKNILDLVEKNAKTTLENFKLKYLQEKALYDNVLKDLKNILSLQEEPIRIEAFDISNIQGFDSVGSMVVFEKGRAKPSDYRRFKISTVKGADDYKSMKEILTRRFQHGLSEIKSIQDRKLEFSSGKFSVFPDLILMDGGKGQINIALEVLNTFNIDIPVCGMVKDNKHRTRGLIYNGEEIIINKYGSVMKFITRVQDEVHRFAISYHRSLRGKNSFHSLLDDIPNIGEKRKKDLLFNFKSIDNIKKATYEELLSIPSMDKKSAESVLEFFK</sequence>
<name>UVRC_CLOBM</name>
<feature type="chain" id="PRO_1000099471" description="UvrABC system protein C">
    <location>
        <begin position="1"/>
        <end position="618"/>
    </location>
</feature>
<feature type="domain" description="GIY-YIG" evidence="1">
    <location>
        <begin position="13"/>
        <end position="92"/>
    </location>
</feature>
<feature type="domain" description="UVR" evidence="1">
    <location>
        <begin position="204"/>
        <end position="239"/>
    </location>
</feature>
<reference key="1">
    <citation type="journal article" date="2007" name="PLoS ONE">
        <title>Analysis of the neurotoxin complex genes in Clostridium botulinum A1-A4 and B1 strains: BoNT/A3, /Ba4 and /B1 clusters are located within plasmids.</title>
        <authorList>
            <person name="Smith T.J."/>
            <person name="Hill K.K."/>
            <person name="Foley B.T."/>
            <person name="Detter J.C."/>
            <person name="Munk A.C."/>
            <person name="Bruce D.C."/>
            <person name="Doggett N.A."/>
            <person name="Smith L.A."/>
            <person name="Marks J.D."/>
            <person name="Xie G."/>
            <person name="Brettin T.S."/>
        </authorList>
    </citation>
    <scope>NUCLEOTIDE SEQUENCE [LARGE SCALE GENOMIC DNA]</scope>
    <source>
        <strain>Loch Maree / Type A3</strain>
    </source>
</reference>
<keyword id="KW-0963">Cytoplasm</keyword>
<keyword id="KW-0227">DNA damage</keyword>
<keyword id="KW-0228">DNA excision</keyword>
<keyword id="KW-0234">DNA repair</keyword>
<keyword id="KW-0267">Excision nuclease</keyword>
<keyword id="KW-0742">SOS response</keyword>
<protein>
    <recommendedName>
        <fullName evidence="1">UvrABC system protein C</fullName>
        <shortName evidence="1">Protein UvrC</shortName>
    </recommendedName>
    <alternativeName>
        <fullName evidence="1">Excinuclease ABC subunit C</fullName>
    </alternativeName>
</protein>
<proteinExistence type="inferred from homology"/>
<evidence type="ECO:0000255" key="1">
    <source>
        <dbReference type="HAMAP-Rule" id="MF_00203"/>
    </source>
</evidence>
<organism>
    <name type="scientific">Clostridium botulinum (strain Loch Maree / Type A3)</name>
    <dbReference type="NCBI Taxonomy" id="498214"/>
    <lineage>
        <taxon>Bacteria</taxon>
        <taxon>Bacillati</taxon>
        <taxon>Bacillota</taxon>
        <taxon>Clostridia</taxon>
        <taxon>Eubacteriales</taxon>
        <taxon>Clostridiaceae</taxon>
        <taxon>Clostridium</taxon>
    </lineage>
</organism>
<accession>B1L273</accession>